<proteinExistence type="inferred from homology"/>
<evidence type="ECO:0000255" key="1">
    <source>
        <dbReference type="HAMAP-Rule" id="MF_01835"/>
    </source>
</evidence>
<sequence length="106" mass="12043">MNTFRKTYVLKLYVAGNTPNSVRALKTLKTILEQEFQGVYALKVIDVLKNPQLAEEDKILATPTLAKVLPPPVRKIIGDLSDREKVLIGLDLLYDEIQDRESELDF</sequence>
<comment type="function">
    <text evidence="1">Key component of the KaiABC oscillator complex, which constitutes the main circadian regulator in cyanobacteria. Complex composition changes during the circadian cycle to control KaiC phosphorylation. KaiA stimulates KaiC autophosphorylation, while KaiB sequesters KaiA, leading to KaiC autodephosphorylation. Phospho-Ser-431 KaiC accumulation triggers binding of KaiB to form the KaiB(6):KaiC(6) complex, leading to changes in output regulators CikA and SasA. KaiB switches to a thioredoxin-like fold (KaiB(fs)) when bound to KaiC. KaiB(6):KaiC(6) formation exposes a site for KaiA binding that sequesters KaiA from KaiC, making the KaiC(6):KaiB(6):KaiA(12) complex that results in KaiC autodephosphorylation.</text>
</comment>
<comment type="function">
    <text evidence="1">A metamorphic protein which reversibly switches between an inactive tetrameric fold and a rare, thioredoxin-like monomeric fold (KaiB(fs)). KaiB(fs) binds phospho-KaiC, KaiA and CikA. KaiA and CikA compete for binding to KaiB(fs), and KaiB(fs) and SasA compete for binding to KaiC, thus the clock oscillator and output signal pathway are tightly coupled.</text>
</comment>
<comment type="subunit">
    <text evidence="1">The KaiABC complex composition changes during the circadian cycle to control KaiC phosphorylation. Complexes KaiC(6), KaiA(2-4):KaiC(6), KaiB(6):KaiC(6) and KaiC(6):KaiB(6):KaiA(12) are among the most important forms, many form cooperatively. Undergoes a major conformational rearrangment; in the free state forms homotetramers as a dimer of dimers. When bound to the CI domain of KaiC switches to a monomeric thioredoxin-fold (KaiB(fs)). KaiB(fs) binds CikA, leading it to dephosphorylate phospho-RpaA.</text>
</comment>
<comment type="domain">
    <text evidence="1">Has 2 forms, fold switches to a thioredoxin-like fold (KaiB(fs)) when bound to KaiC.</text>
</comment>
<comment type="similarity">
    <text evidence="1">Belongs to the KaiB family.</text>
</comment>
<organism>
    <name type="scientific">Gloeothece citriformis (strain PCC 7424)</name>
    <name type="common">Cyanothece sp. (strain PCC 7424)</name>
    <dbReference type="NCBI Taxonomy" id="65393"/>
    <lineage>
        <taxon>Bacteria</taxon>
        <taxon>Bacillati</taxon>
        <taxon>Cyanobacteriota</taxon>
        <taxon>Cyanophyceae</taxon>
        <taxon>Oscillatoriophycideae</taxon>
        <taxon>Chroococcales</taxon>
        <taxon>Aphanothecaceae</taxon>
        <taxon>Gloeothece</taxon>
        <taxon>Gloeothece citriformis</taxon>
    </lineage>
</organism>
<dbReference type="EMBL" id="CP001291">
    <property type="protein sequence ID" value="ACK69061.1"/>
    <property type="molecule type" value="Genomic_DNA"/>
</dbReference>
<dbReference type="RefSeq" id="WP_012598008.1">
    <property type="nucleotide sequence ID" value="NC_011729.1"/>
</dbReference>
<dbReference type="SMR" id="B7KEN6"/>
<dbReference type="STRING" id="65393.PCC7424_0600"/>
<dbReference type="KEGG" id="cyc:PCC7424_0600"/>
<dbReference type="eggNOG" id="COG4251">
    <property type="taxonomic scope" value="Bacteria"/>
</dbReference>
<dbReference type="HOGENOM" id="CLU_144073_0_0_3"/>
<dbReference type="OrthoDB" id="5458519at2"/>
<dbReference type="Proteomes" id="UP000002384">
    <property type="component" value="Chromosome"/>
</dbReference>
<dbReference type="GO" id="GO:0007623">
    <property type="term" value="P:circadian rhythm"/>
    <property type="evidence" value="ECO:0007669"/>
    <property type="project" value="UniProtKB-UniRule"/>
</dbReference>
<dbReference type="CDD" id="cd02978">
    <property type="entry name" value="KaiB_like"/>
    <property type="match status" value="1"/>
</dbReference>
<dbReference type="FunFam" id="3.40.30.10:FF:000180">
    <property type="entry name" value="Circadian clock protein KaiB"/>
    <property type="match status" value="1"/>
</dbReference>
<dbReference type="Gene3D" id="3.40.30.10">
    <property type="entry name" value="Glutaredoxin"/>
    <property type="match status" value="1"/>
</dbReference>
<dbReference type="HAMAP" id="MF_01835">
    <property type="entry name" value="KaiB"/>
    <property type="match status" value="1"/>
</dbReference>
<dbReference type="InterPro" id="IPR013474">
    <property type="entry name" value="Circ_KaiB"/>
</dbReference>
<dbReference type="InterPro" id="IPR039022">
    <property type="entry name" value="KaiB-like"/>
</dbReference>
<dbReference type="InterPro" id="IPR011649">
    <property type="entry name" value="KaiB_domain"/>
</dbReference>
<dbReference type="InterPro" id="IPR036249">
    <property type="entry name" value="Thioredoxin-like_sf"/>
</dbReference>
<dbReference type="NCBIfam" id="TIGR02654">
    <property type="entry name" value="circ_KaiB"/>
    <property type="match status" value="1"/>
</dbReference>
<dbReference type="NCBIfam" id="NF006798">
    <property type="entry name" value="PRK09301.1"/>
    <property type="match status" value="1"/>
</dbReference>
<dbReference type="PANTHER" id="PTHR41709:SF2">
    <property type="entry name" value="CIRCADIAN CLOCK PROTEIN KAIB2"/>
    <property type="match status" value="1"/>
</dbReference>
<dbReference type="PANTHER" id="PTHR41709">
    <property type="entry name" value="KAIB-LIKE PROTEIN 1"/>
    <property type="match status" value="1"/>
</dbReference>
<dbReference type="Pfam" id="PF07689">
    <property type="entry name" value="KaiB"/>
    <property type="match status" value="1"/>
</dbReference>
<dbReference type="SMART" id="SM01248">
    <property type="entry name" value="KaiB"/>
    <property type="match status" value="1"/>
</dbReference>
<dbReference type="SUPFAM" id="SSF52833">
    <property type="entry name" value="Thioredoxin-like"/>
    <property type="match status" value="1"/>
</dbReference>
<feature type="chain" id="PRO_1000188346" description="Circadian clock oscillator protein KaiB">
    <location>
        <begin position="1"/>
        <end position="106"/>
    </location>
</feature>
<keyword id="KW-0090">Biological rhythms</keyword>
<keyword id="KW-1185">Reference proteome</keyword>
<accession>B7KEN6</accession>
<gene>
    <name evidence="1" type="primary">kaiB</name>
    <name type="ordered locus">PCC7424_0600</name>
</gene>
<protein>
    <recommendedName>
        <fullName evidence="1">Circadian clock oscillator protein KaiB</fullName>
    </recommendedName>
</protein>
<name>KAIB_GLOC7</name>
<reference key="1">
    <citation type="journal article" date="2011" name="MBio">
        <title>Novel metabolic attributes of the genus Cyanothece, comprising a group of unicellular nitrogen-fixing Cyanobacteria.</title>
        <authorList>
            <person name="Bandyopadhyay A."/>
            <person name="Elvitigala T."/>
            <person name="Welsh E."/>
            <person name="Stockel J."/>
            <person name="Liberton M."/>
            <person name="Min H."/>
            <person name="Sherman L.A."/>
            <person name="Pakrasi H.B."/>
        </authorList>
    </citation>
    <scope>NUCLEOTIDE SEQUENCE [LARGE SCALE GENOMIC DNA]</scope>
    <source>
        <strain>PCC 7424</strain>
    </source>
</reference>